<gene>
    <name evidence="1" type="primary">pyrC</name>
    <name type="ordered locus">ECH74115_1441</name>
</gene>
<protein>
    <recommendedName>
        <fullName evidence="1">Dihydroorotase</fullName>
        <shortName evidence="1">DHOase</shortName>
        <ecNumber evidence="1">3.5.2.3</ecNumber>
    </recommendedName>
</protein>
<reference key="1">
    <citation type="journal article" date="2011" name="Proc. Natl. Acad. Sci. U.S.A.">
        <title>Genomic anatomy of Escherichia coli O157:H7 outbreaks.</title>
        <authorList>
            <person name="Eppinger M."/>
            <person name="Mammel M.K."/>
            <person name="Leclerc J.E."/>
            <person name="Ravel J."/>
            <person name="Cebula T.A."/>
        </authorList>
    </citation>
    <scope>NUCLEOTIDE SEQUENCE [LARGE SCALE GENOMIC DNA]</scope>
    <source>
        <strain>EC4115 / EHEC</strain>
    </source>
</reference>
<dbReference type="EC" id="3.5.2.3" evidence="1"/>
<dbReference type="EMBL" id="CP001164">
    <property type="protein sequence ID" value="ACI36745.1"/>
    <property type="molecule type" value="Genomic_DNA"/>
</dbReference>
<dbReference type="RefSeq" id="WP_000126564.1">
    <property type="nucleotide sequence ID" value="NC_011353.1"/>
</dbReference>
<dbReference type="SMR" id="B5YVT2"/>
<dbReference type="MEROPS" id="M38.A02"/>
<dbReference type="KEGG" id="ecf:ECH74115_1441"/>
<dbReference type="HOGENOM" id="CLU_041558_1_0_6"/>
<dbReference type="UniPathway" id="UPA00070">
    <property type="reaction ID" value="UER00117"/>
</dbReference>
<dbReference type="GO" id="GO:0005829">
    <property type="term" value="C:cytosol"/>
    <property type="evidence" value="ECO:0007669"/>
    <property type="project" value="TreeGrafter"/>
</dbReference>
<dbReference type="GO" id="GO:0004151">
    <property type="term" value="F:dihydroorotase activity"/>
    <property type="evidence" value="ECO:0007669"/>
    <property type="project" value="UniProtKB-UniRule"/>
</dbReference>
<dbReference type="GO" id="GO:0008270">
    <property type="term" value="F:zinc ion binding"/>
    <property type="evidence" value="ECO:0007669"/>
    <property type="project" value="UniProtKB-UniRule"/>
</dbReference>
<dbReference type="GO" id="GO:0006207">
    <property type="term" value="P:'de novo' pyrimidine nucleobase biosynthetic process"/>
    <property type="evidence" value="ECO:0007669"/>
    <property type="project" value="TreeGrafter"/>
</dbReference>
<dbReference type="GO" id="GO:0044205">
    <property type="term" value="P:'de novo' UMP biosynthetic process"/>
    <property type="evidence" value="ECO:0007669"/>
    <property type="project" value="UniProtKB-UniRule"/>
</dbReference>
<dbReference type="CDD" id="cd01294">
    <property type="entry name" value="DHOase"/>
    <property type="match status" value="1"/>
</dbReference>
<dbReference type="FunFam" id="3.20.20.140:FF:000006">
    <property type="entry name" value="Dihydroorotase"/>
    <property type="match status" value="1"/>
</dbReference>
<dbReference type="Gene3D" id="3.20.20.140">
    <property type="entry name" value="Metal-dependent hydrolases"/>
    <property type="match status" value="1"/>
</dbReference>
<dbReference type="HAMAP" id="MF_00219">
    <property type="entry name" value="PyrC_classII"/>
    <property type="match status" value="1"/>
</dbReference>
<dbReference type="InterPro" id="IPR006680">
    <property type="entry name" value="Amidohydro-rel"/>
</dbReference>
<dbReference type="InterPro" id="IPR004721">
    <property type="entry name" value="DHOdimr"/>
</dbReference>
<dbReference type="InterPro" id="IPR002195">
    <property type="entry name" value="Dihydroorotase_CS"/>
</dbReference>
<dbReference type="InterPro" id="IPR032466">
    <property type="entry name" value="Metal_Hydrolase"/>
</dbReference>
<dbReference type="NCBIfam" id="TIGR00856">
    <property type="entry name" value="pyrC_dimer"/>
    <property type="match status" value="1"/>
</dbReference>
<dbReference type="PANTHER" id="PTHR43137">
    <property type="entry name" value="DIHYDROOROTASE"/>
    <property type="match status" value="1"/>
</dbReference>
<dbReference type="PANTHER" id="PTHR43137:SF1">
    <property type="entry name" value="DIHYDROOROTASE"/>
    <property type="match status" value="1"/>
</dbReference>
<dbReference type="Pfam" id="PF01979">
    <property type="entry name" value="Amidohydro_1"/>
    <property type="match status" value="1"/>
</dbReference>
<dbReference type="PIRSF" id="PIRSF001237">
    <property type="entry name" value="DHOdimr"/>
    <property type="match status" value="1"/>
</dbReference>
<dbReference type="SUPFAM" id="SSF51556">
    <property type="entry name" value="Metallo-dependent hydrolases"/>
    <property type="match status" value="1"/>
</dbReference>
<dbReference type="PROSITE" id="PS00482">
    <property type="entry name" value="DIHYDROOROTASE_1"/>
    <property type="match status" value="1"/>
</dbReference>
<dbReference type="PROSITE" id="PS00483">
    <property type="entry name" value="DIHYDROOROTASE_2"/>
    <property type="match status" value="1"/>
</dbReference>
<comment type="function">
    <text evidence="1">Catalyzes the reversible cyclization of carbamoyl aspartate to dihydroorotate.</text>
</comment>
<comment type="catalytic activity">
    <reaction evidence="1">
        <text>(S)-dihydroorotate + H2O = N-carbamoyl-L-aspartate + H(+)</text>
        <dbReference type="Rhea" id="RHEA:24296"/>
        <dbReference type="ChEBI" id="CHEBI:15377"/>
        <dbReference type="ChEBI" id="CHEBI:15378"/>
        <dbReference type="ChEBI" id="CHEBI:30864"/>
        <dbReference type="ChEBI" id="CHEBI:32814"/>
        <dbReference type="EC" id="3.5.2.3"/>
    </reaction>
</comment>
<comment type="cofactor">
    <cofactor evidence="1">
        <name>Zn(2+)</name>
        <dbReference type="ChEBI" id="CHEBI:29105"/>
    </cofactor>
    <text evidence="1">Binds 2 Zn(2+) ions per subunit.</text>
</comment>
<comment type="pathway">
    <text evidence="1">Pyrimidine metabolism; UMP biosynthesis via de novo pathway; (S)-dihydroorotate from bicarbonate: step 3/3.</text>
</comment>
<comment type="subunit">
    <text evidence="1">Homodimer.</text>
</comment>
<comment type="similarity">
    <text evidence="1">Belongs to the metallo-dependent hydrolases superfamily. DHOase family. Class II DHOase subfamily.</text>
</comment>
<organism>
    <name type="scientific">Escherichia coli O157:H7 (strain EC4115 / EHEC)</name>
    <dbReference type="NCBI Taxonomy" id="444450"/>
    <lineage>
        <taxon>Bacteria</taxon>
        <taxon>Pseudomonadati</taxon>
        <taxon>Pseudomonadota</taxon>
        <taxon>Gammaproteobacteria</taxon>
        <taxon>Enterobacterales</taxon>
        <taxon>Enterobacteriaceae</taxon>
        <taxon>Escherichia</taxon>
    </lineage>
</organism>
<name>PYRC_ECO5E</name>
<keyword id="KW-0378">Hydrolase</keyword>
<keyword id="KW-0479">Metal-binding</keyword>
<keyword id="KW-0665">Pyrimidine biosynthesis</keyword>
<keyword id="KW-0862">Zinc</keyword>
<feature type="chain" id="PRO_1000100041" description="Dihydroorotase">
    <location>
        <begin position="1"/>
        <end position="348"/>
    </location>
</feature>
<feature type="active site" evidence="1">
    <location>
        <position position="251"/>
    </location>
</feature>
<feature type="binding site" evidence="1">
    <location>
        <position position="17"/>
    </location>
    <ligand>
        <name>Zn(2+)</name>
        <dbReference type="ChEBI" id="CHEBI:29105"/>
        <label>1</label>
    </ligand>
</feature>
<feature type="binding site" evidence="1">
    <location>
        <begin position="19"/>
        <end position="21"/>
    </location>
    <ligand>
        <name>substrate</name>
    </ligand>
</feature>
<feature type="binding site" evidence="1">
    <location>
        <position position="19"/>
    </location>
    <ligand>
        <name>Zn(2+)</name>
        <dbReference type="ChEBI" id="CHEBI:29105"/>
        <label>1</label>
    </ligand>
</feature>
<feature type="binding site" evidence="1">
    <location>
        <position position="45"/>
    </location>
    <ligand>
        <name>substrate</name>
    </ligand>
</feature>
<feature type="binding site" description="via carbamate group" evidence="1">
    <location>
        <position position="103"/>
    </location>
    <ligand>
        <name>Zn(2+)</name>
        <dbReference type="ChEBI" id="CHEBI:29105"/>
        <label>1</label>
    </ligand>
</feature>
<feature type="binding site" description="via carbamate group" evidence="1">
    <location>
        <position position="103"/>
    </location>
    <ligand>
        <name>Zn(2+)</name>
        <dbReference type="ChEBI" id="CHEBI:29105"/>
        <label>2</label>
    </ligand>
</feature>
<feature type="binding site" evidence="1">
    <location>
        <position position="140"/>
    </location>
    <ligand>
        <name>substrate</name>
    </ligand>
</feature>
<feature type="binding site" evidence="1">
    <location>
        <position position="140"/>
    </location>
    <ligand>
        <name>Zn(2+)</name>
        <dbReference type="ChEBI" id="CHEBI:29105"/>
        <label>2</label>
    </ligand>
</feature>
<feature type="binding site" evidence="1">
    <location>
        <position position="178"/>
    </location>
    <ligand>
        <name>Zn(2+)</name>
        <dbReference type="ChEBI" id="CHEBI:29105"/>
        <label>2</label>
    </ligand>
</feature>
<feature type="binding site" evidence="1">
    <location>
        <position position="223"/>
    </location>
    <ligand>
        <name>substrate</name>
    </ligand>
</feature>
<feature type="binding site" evidence="1">
    <location>
        <position position="251"/>
    </location>
    <ligand>
        <name>Zn(2+)</name>
        <dbReference type="ChEBI" id="CHEBI:29105"/>
        <label>1</label>
    </ligand>
</feature>
<feature type="binding site" evidence="1">
    <location>
        <position position="255"/>
    </location>
    <ligand>
        <name>substrate</name>
    </ligand>
</feature>
<feature type="binding site" evidence="1">
    <location>
        <position position="267"/>
    </location>
    <ligand>
        <name>substrate</name>
    </ligand>
</feature>
<feature type="modified residue" description="N6-carboxylysine" evidence="1">
    <location>
        <position position="103"/>
    </location>
</feature>
<accession>B5YVT2</accession>
<proteinExistence type="inferred from homology"/>
<sequence length="348" mass="38844">MTAPSQVLKIRRPDDWHLHLRDGDMLKTVVPYTSEIYGRAIVMPNLAPPVTTVEAAVAYRQRILHAVPAGHDFTPLMTCYLTDSLDPNELERGFNEGVFTAAKLYPANATTNSSHGVTSVDAIMPVLERMEKIGMPLLVHGEVTHADIDIFDREARFIESVMEPLRQRLTALKVVFEHITTKDAADYVRDGNERLAATITPQHLMFNRNHMLVGGVRPHLYCLPILKRNIHQQALRELVASGFNRVFLGTDSAPHARHRKESSCGCAGCFNAPTALGSYATVFEEMNALQHFEAFCSVNGPQFYGLPVNDTFIELVREEHQVAESIALTDDTLVPFLAGETVRWSVKQ</sequence>
<evidence type="ECO:0000255" key="1">
    <source>
        <dbReference type="HAMAP-Rule" id="MF_00219"/>
    </source>
</evidence>